<keyword id="KW-0150">Chloroplast</keyword>
<keyword id="KW-0472">Membrane</keyword>
<keyword id="KW-0934">Plastid</keyword>
<keyword id="KW-1001">Plastid inner membrane</keyword>
<keyword id="KW-0653">Protein transport</keyword>
<keyword id="KW-0812">Transmembrane</keyword>
<keyword id="KW-1133">Transmembrane helix</keyword>
<keyword id="KW-0813">Transport</keyword>
<proteinExistence type="inferred from homology"/>
<feature type="chain" id="PRO_0000326584" description="Protein TIC 214">
    <location>
        <begin position="1"/>
        <end position="1759"/>
    </location>
</feature>
<feature type="transmembrane region" description="Helical" evidence="2">
    <location>
        <begin position="23"/>
        <end position="45"/>
    </location>
</feature>
<feature type="transmembrane region" description="Helical" evidence="2">
    <location>
        <begin position="64"/>
        <end position="84"/>
    </location>
</feature>
<feature type="transmembrane region" description="Helical" evidence="2">
    <location>
        <begin position="129"/>
        <end position="149"/>
    </location>
</feature>
<feature type="transmembrane region" description="Helical" evidence="2">
    <location>
        <begin position="172"/>
        <end position="192"/>
    </location>
</feature>
<feature type="transmembrane region" description="Helical" evidence="2">
    <location>
        <begin position="221"/>
        <end position="241"/>
    </location>
</feature>
<feature type="sequence conflict" description="In Ref. 2; ABW22810." evidence="3" ref="2">
    <original>PKKEEE</original>
    <variation>TEKRGG</variation>
    <location>
        <begin position="752"/>
        <end position="757"/>
    </location>
</feature>
<dbReference type="EMBL" id="DQ886273">
    <property type="protein sequence ID" value="ABH88136.1"/>
    <property type="molecule type" value="Genomic_DNA"/>
</dbReference>
<dbReference type="EMBL" id="EU196765">
    <property type="protein sequence ID" value="ABW22810.1"/>
    <property type="molecule type" value="Genomic_DNA"/>
</dbReference>
<dbReference type="KEGG" id="pvu:4961793"/>
<dbReference type="eggNOG" id="ENOG502QSDY">
    <property type="taxonomic scope" value="Eukaryota"/>
</dbReference>
<dbReference type="GO" id="GO:0009706">
    <property type="term" value="C:chloroplast inner membrane"/>
    <property type="evidence" value="ECO:0007669"/>
    <property type="project" value="UniProtKB-SubCell"/>
</dbReference>
<dbReference type="GO" id="GO:0015031">
    <property type="term" value="P:protein transport"/>
    <property type="evidence" value="ECO:0007669"/>
    <property type="project" value="UniProtKB-KW"/>
</dbReference>
<dbReference type="InterPro" id="IPR008896">
    <property type="entry name" value="TIC214"/>
</dbReference>
<dbReference type="PANTHER" id="PTHR33163:SF40">
    <property type="entry name" value="PROTEIN TIC 214"/>
    <property type="match status" value="1"/>
</dbReference>
<dbReference type="PANTHER" id="PTHR33163">
    <property type="entry name" value="PROTEIN TIC 214-RELATED"/>
    <property type="match status" value="1"/>
</dbReference>
<dbReference type="Pfam" id="PF05758">
    <property type="entry name" value="Ycf1"/>
    <property type="match status" value="2"/>
</dbReference>
<comment type="function">
    <text evidence="1">Involved in protein precursor import into chloroplasts. May be part of an intermediate translocation complex acting as a protein-conducting channel at the inner envelope.</text>
</comment>
<comment type="subunit">
    <text evidence="1">Part of the Tic complex.</text>
</comment>
<comment type="subcellular location">
    <subcellularLocation>
        <location evidence="1">Plastid</location>
        <location evidence="1">Chloroplast inner membrane</location>
        <topology evidence="2">Multi-pass membrane protein</topology>
    </subcellularLocation>
</comment>
<comment type="similarity">
    <text evidence="3">Belongs to the TIC214 family.</text>
</comment>
<reference key="1">
    <citation type="journal article" date="2007" name="BMC Genomics">
        <title>Rapid evolutionary change of common bean (Phaseolus vulgaris L) plastome, and the genomic diversification of legume chloroplasts.</title>
        <authorList>
            <person name="Guo X."/>
            <person name="Castillo-Ramirez S."/>
            <person name="Gonzalez V."/>
            <person name="Bustos P."/>
            <person name="Fernandez-Vazquez J.L."/>
            <person name="Santamaria R.I."/>
            <person name="Arellano J."/>
            <person name="Cevallos M.A."/>
            <person name="Davila G."/>
        </authorList>
    </citation>
    <scope>NUCLEOTIDE SEQUENCE [LARGE SCALE GENOMIC DNA]</scope>
    <source>
        <strain>cv. Negro Jamapa</strain>
    </source>
</reference>
<reference key="2">
    <citation type="submission" date="2007-10" db="EMBL/GenBank/DDBJ databases">
        <title>Complete nucleotide sequence of the plastid genome of the common bean, Phaseolus vulgaris.</title>
        <authorList>
            <person name="Moore M.J."/>
            <person name="Triplett E.W."/>
            <person name="Broughton W.J."/>
            <person name="Soltis P.S."/>
            <person name="Soltis D.E."/>
        </authorList>
    </citation>
    <scope>NUCLEOTIDE SEQUENCE [LARGE SCALE GENOMIC DNA]</scope>
</reference>
<name>TI214_PHAVU</name>
<evidence type="ECO:0000250" key="1">
    <source>
        <dbReference type="UniProtKB" id="P56785"/>
    </source>
</evidence>
<evidence type="ECO:0000255" key="2"/>
<evidence type="ECO:0000305" key="3"/>
<sequence>MIFESFILENLVFLCMKIMNSIVVVGLYYGFMTTFSIGPSYLFLLRARLVEEGTENKISATTGFITGQLIIFMSIYYAPLHLALGRPHTITVIAIPYLLFQFFGNSKKNFLNYGYKNPNSIRNFSIQRIFFQNLLFQFFNPLFLPSSIFMRFVNIYLFRCNNKVLFLTSSFIGWIIGHTFFMKWIEFLLICIQQNNLIKSNVRIQSNKYILSELKNSMFQIFVVFLFVTCLYYLGRIPPPFFSKKLLEIKESNEFFKKEKKGDVETNLQRIRTKQKRSNNKDIFPSIFLKKEKNLYKLDEQKNKLQKPLLNILFNYKRWNRPFRYIKNNQFENIIKNEISEFFFHTYPRNGREKIYFTYPQNLSTFQKMMETKIDIFTIKKISYDDSSNHSSYSNEEKRKKLSNEFITRTKLIDKELISLDIFENRIRLCNDETKKNYFTKITDPFLNGPFRGRIKKGFSTSIQDEKTYKKNHILINKIQEIFLYNSKKIPKKNNRNYQKLEENLKTFNKKLLVTTFLFNLISQFSKKSVSSFNYEVLYLFPEHEQVKMNSNLEEEKKLIIKILFDAITTDLNEKTKGNRNNTKSIKINEICKKVPRWSYKFMDELEELGGKMEADNSQIRSRKAKRVVILTNKSKFFKKYNTYNDLGDTENTENTEKKNELALRRYSQQSDFRRDIIKGSIRAQRRKTVTWKFFQKRVHSPLFLDKIEKSLFFSFDTFKSMKIFLKLKIWIRKKTEFKILGYIEEKTKKSPKKEEEKKKGNEERKRIEIAEAWDSIIFAQVIRGVLLITQCIIRKYILLPSLIIIKNMIRILFFQIPEWSEDYRDWKRERYIKCTYNGVQLSEREFPQKWLTDGIQIKIVFPFHLKPWHKYKIRCNKKKKDSKKKKNFCFLTVWGMEVELPFSSSPKNLFSFFDPILKELKKKTKQFEFFTFRVLKVFSEKFKLFLNIVIEKAKWIINRIMESLKKSIVFLTKKRKEFFESLFIQWKPKKLDELSENKIDEATISIQSIKSTNFALKKKKIKDLNTKRKVVIKKIKKLKKEEKKRGLVISETNIDSNKTISDSKRIEFEKKNLQILKRIHIRLTKKSHSFLKFFIKKIYLDIFLYIICIPKIHIQPFIESTKKFLNKWIYGNETNAERTYKTNQSIIPFISKLHKYFHNRNLNSHNYFDVSFLSQAYVFFNLLQTRIININIYKLRLLFEYHKNFFFVKNKIKNSFFGAQGIVHSKLEQKNLLNSKRNQWTNWLKNHYYQYDLSNSRWSKLLSQKWRNRITKFGVAQNPNLTKWDSYGKSPLIIYKEQQGAALKKKIRKQYRYDLLSYNFMNYANKKDSYIYGYRSLFQSNKNIWISSNYNTYKKNLFDRISNIFIKNYEDAIIIDIEKNSNRKYLDWMGIHREILNRSISNPEFWFFSKFVIFYNAYRSNSQIIPIKLLYLHSKVSKVNKNVSEKNITRKKKRIAVFRASKKQEDIEKNSVAVGRGSEKNSYVIKKKKVKNNMEVELHFLVRNFLIFHFNWKNFLGQNIFHNVKVYCLLIRLTNLRKMTIASIQRGELGLDIMIIQNQKNLTLPGLSKNKNNKLRKKELFVIEPVRLSRKNNKQFLKSKTMDLSLIHKNKRKIDKKYLKKIHVNKKSFYKYITRTRDQKITEKNEKEILNFLVPENILSARRRRELRMRICLYPNNRNSIHRNTIFDNENKVKKGFQVLTKKRNEKEKKKLMNFKIFLWPKYRLEDLACINRYWFNTHNGSRFSIVRIHLYPRVKIC</sequence>
<protein>
    <recommendedName>
        <fullName evidence="1">Protein TIC 214</fullName>
    </recommendedName>
    <alternativeName>
        <fullName evidence="1">Translocon at the inner envelope membrane of chloroplasts 214</fullName>
        <shortName evidence="1">AtTIC214</shortName>
    </alternativeName>
</protein>
<geneLocation type="chloroplast"/>
<gene>
    <name evidence="1" type="primary">TIC214</name>
    <name type="synonym">ycf1</name>
</gene>
<accession>A4GGF4</accession>
<accession>A8W840</accession>
<organism>
    <name type="scientific">Phaseolus vulgaris</name>
    <name type="common">Kidney bean</name>
    <name type="synonym">French bean</name>
    <dbReference type="NCBI Taxonomy" id="3885"/>
    <lineage>
        <taxon>Eukaryota</taxon>
        <taxon>Viridiplantae</taxon>
        <taxon>Streptophyta</taxon>
        <taxon>Embryophyta</taxon>
        <taxon>Tracheophyta</taxon>
        <taxon>Spermatophyta</taxon>
        <taxon>Magnoliopsida</taxon>
        <taxon>eudicotyledons</taxon>
        <taxon>Gunneridae</taxon>
        <taxon>Pentapetalae</taxon>
        <taxon>rosids</taxon>
        <taxon>fabids</taxon>
        <taxon>Fabales</taxon>
        <taxon>Fabaceae</taxon>
        <taxon>Papilionoideae</taxon>
        <taxon>50 kb inversion clade</taxon>
        <taxon>NPAAA clade</taxon>
        <taxon>indigoferoid/millettioid clade</taxon>
        <taxon>Phaseoleae</taxon>
        <taxon>Phaseolus</taxon>
    </lineage>
</organism>